<proteinExistence type="inferred from homology"/>
<sequence length="175" mass="19042">MTTIVSVRRKGQVVVGGDGQVSLGNTVMKGNARKVRRLYNGKVLTGFAGGTADAFTLFELFERKLEMHQGHLLKSAVELAKEWRTDRALRRLEAMLIVADKTESLIITGNGDVVQPEEDQILAIGSGGNYALSAARALVENTDLSAREIVEKSLKIAGDICVFTNLTHTIEELSE</sequence>
<evidence type="ECO:0000255" key="1">
    <source>
        <dbReference type="HAMAP-Rule" id="MF_00248"/>
    </source>
</evidence>
<organism>
    <name type="scientific">Histophilus somni (strain 129Pt)</name>
    <name type="common">Haemophilus somnus</name>
    <dbReference type="NCBI Taxonomy" id="205914"/>
    <lineage>
        <taxon>Bacteria</taxon>
        <taxon>Pseudomonadati</taxon>
        <taxon>Pseudomonadota</taxon>
        <taxon>Gammaproteobacteria</taxon>
        <taxon>Pasteurellales</taxon>
        <taxon>Pasteurellaceae</taxon>
        <taxon>Histophilus</taxon>
    </lineage>
</organism>
<name>HSLV_HISS1</name>
<protein>
    <recommendedName>
        <fullName evidence="1">ATP-dependent protease subunit HslV</fullName>
        <ecNumber evidence="1">3.4.25.2</ecNumber>
    </recommendedName>
</protein>
<accession>Q0I5E1</accession>
<reference key="1">
    <citation type="journal article" date="2007" name="J. Bacteriol.">
        <title>Complete genome sequence of Haemophilus somnus (Histophilus somni) strain 129Pt and comparison to Haemophilus ducreyi 35000HP and Haemophilus influenzae Rd.</title>
        <authorList>
            <person name="Challacombe J.F."/>
            <person name="Duncan A.J."/>
            <person name="Brettin T.S."/>
            <person name="Bruce D."/>
            <person name="Chertkov O."/>
            <person name="Detter J.C."/>
            <person name="Han C.S."/>
            <person name="Misra M."/>
            <person name="Richardson P."/>
            <person name="Tapia R."/>
            <person name="Thayer N."/>
            <person name="Xie G."/>
            <person name="Inzana T.J."/>
        </authorList>
    </citation>
    <scope>NUCLEOTIDE SEQUENCE [LARGE SCALE GENOMIC DNA]</scope>
    <source>
        <strain>129Pt</strain>
    </source>
</reference>
<comment type="function">
    <text evidence="1">Protease subunit of a proteasome-like degradation complex believed to be a general protein degrading machinery.</text>
</comment>
<comment type="catalytic activity">
    <reaction evidence="1">
        <text>ATP-dependent cleavage of peptide bonds with broad specificity.</text>
        <dbReference type="EC" id="3.4.25.2"/>
    </reaction>
</comment>
<comment type="activity regulation">
    <text evidence="1">Allosterically activated by HslU binding.</text>
</comment>
<comment type="subunit">
    <text evidence="1">A double ring-shaped homohexamer of HslV is capped on each side by a ring-shaped HslU homohexamer. The assembly of the HslU/HslV complex is dependent on binding of ATP.</text>
</comment>
<comment type="subcellular location">
    <subcellularLocation>
        <location evidence="1">Cytoplasm</location>
    </subcellularLocation>
</comment>
<comment type="similarity">
    <text evidence="1">Belongs to the peptidase T1B family. HslV subfamily.</text>
</comment>
<gene>
    <name evidence="1" type="primary">hslV</name>
    <name type="ordered locus">HS_1541</name>
</gene>
<keyword id="KW-0021">Allosteric enzyme</keyword>
<keyword id="KW-0963">Cytoplasm</keyword>
<keyword id="KW-0378">Hydrolase</keyword>
<keyword id="KW-0479">Metal-binding</keyword>
<keyword id="KW-0645">Protease</keyword>
<keyword id="KW-0915">Sodium</keyword>
<keyword id="KW-0346">Stress response</keyword>
<keyword id="KW-0888">Threonine protease</keyword>
<dbReference type="EC" id="3.4.25.2" evidence="1"/>
<dbReference type="EMBL" id="CP000436">
    <property type="protein sequence ID" value="ABI25809.1"/>
    <property type="molecule type" value="Genomic_DNA"/>
</dbReference>
<dbReference type="SMR" id="Q0I5E1"/>
<dbReference type="MEROPS" id="T01.006"/>
<dbReference type="KEGG" id="hso:HS_1541"/>
<dbReference type="eggNOG" id="COG5405">
    <property type="taxonomic scope" value="Bacteria"/>
</dbReference>
<dbReference type="HOGENOM" id="CLU_093872_1_0_6"/>
<dbReference type="GO" id="GO:0009376">
    <property type="term" value="C:HslUV protease complex"/>
    <property type="evidence" value="ECO:0007669"/>
    <property type="project" value="UniProtKB-UniRule"/>
</dbReference>
<dbReference type="GO" id="GO:0005839">
    <property type="term" value="C:proteasome core complex"/>
    <property type="evidence" value="ECO:0007669"/>
    <property type="project" value="InterPro"/>
</dbReference>
<dbReference type="GO" id="GO:0046872">
    <property type="term" value="F:metal ion binding"/>
    <property type="evidence" value="ECO:0007669"/>
    <property type="project" value="UniProtKB-KW"/>
</dbReference>
<dbReference type="GO" id="GO:0004298">
    <property type="term" value="F:threonine-type endopeptidase activity"/>
    <property type="evidence" value="ECO:0007669"/>
    <property type="project" value="UniProtKB-KW"/>
</dbReference>
<dbReference type="GO" id="GO:0051603">
    <property type="term" value="P:proteolysis involved in protein catabolic process"/>
    <property type="evidence" value="ECO:0007669"/>
    <property type="project" value="InterPro"/>
</dbReference>
<dbReference type="CDD" id="cd01913">
    <property type="entry name" value="protease_HslV"/>
    <property type="match status" value="1"/>
</dbReference>
<dbReference type="FunFam" id="3.60.20.10:FF:000002">
    <property type="entry name" value="ATP-dependent protease subunit HslV"/>
    <property type="match status" value="1"/>
</dbReference>
<dbReference type="Gene3D" id="3.60.20.10">
    <property type="entry name" value="Glutamine Phosphoribosylpyrophosphate, subunit 1, domain 1"/>
    <property type="match status" value="1"/>
</dbReference>
<dbReference type="HAMAP" id="MF_00248">
    <property type="entry name" value="HslV"/>
    <property type="match status" value="1"/>
</dbReference>
<dbReference type="InterPro" id="IPR022281">
    <property type="entry name" value="ATP-dep_Prtase_HsIV_su"/>
</dbReference>
<dbReference type="InterPro" id="IPR029055">
    <property type="entry name" value="Ntn_hydrolases_N"/>
</dbReference>
<dbReference type="InterPro" id="IPR001353">
    <property type="entry name" value="Proteasome_sua/b"/>
</dbReference>
<dbReference type="InterPro" id="IPR023333">
    <property type="entry name" value="Proteasome_suB-type"/>
</dbReference>
<dbReference type="NCBIfam" id="TIGR03692">
    <property type="entry name" value="ATP_dep_HslV"/>
    <property type="match status" value="1"/>
</dbReference>
<dbReference type="NCBIfam" id="NF003964">
    <property type="entry name" value="PRK05456.1"/>
    <property type="match status" value="1"/>
</dbReference>
<dbReference type="PANTHER" id="PTHR32194:SF0">
    <property type="entry name" value="ATP-DEPENDENT PROTEASE SUBUNIT HSLV"/>
    <property type="match status" value="1"/>
</dbReference>
<dbReference type="PANTHER" id="PTHR32194">
    <property type="entry name" value="METALLOPROTEASE TLDD"/>
    <property type="match status" value="1"/>
</dbReference>
<dbReference type="Pfam" id="PF00227">
    <property type="entry name" value="Proteasome"/>
    <property type="match status" value="1"/>
</dbReference>
<dbReference type="PIRSF" id="PIRSF039093">
    <property type="entry name" value="HslV"/>
    <property type="match status" value="1"/>
</dbReference>
<dbReference type="SUPFAM" id="SSF56235">
    <property type="entry name" value="N-terminal nucleophile aminohydrolases (Ntn hydrolases)"/>
    <property type="match status" value="1"/>
</dbReference>
<dbReference type="PROSITE" id="PS51476">
    <property type="entry name" value="PROTEASOME_BETA_2"/>
    <property type="match status" value="1"/>
</dbReference>
<feature type="chain" id="PRO_1000012617" description="ATP-dependent protease subunit HslV">
    <location>
        <begin position="1"/>
        <end position="175"/>
    </location>
</feature>
<feature type="active site" evidence="1">
    <location>
        <position position="2"/>
    </location>
</feature>
<feature type="binding site" evidence="1">
    <location>
        <position position="158"/>
    </location>
    <ligand>
        <name>Na(+)</name>
        <dbReference type="ChEBI" id="CHEBI:29101"/>
    </ligand>
</feature>
<feature type="binding site" evidence="1">
    <location>
        <position position="161"/>
    </location>
    <ligand>
        <name>Na(+)</name>
        <dbReference type="ChEBI" id="CHEBI:29101"/>
    </ligand>
</feature>
<feature type="binding site" evidence="1">
    <location>
        <position position="164"/>
    </location>
    <ligand>
        <name>Na(+)</name>
        <dbReference type="ChEBI" id="CHEBI:29101"/>
    </ligand>
</feature>